<reference key="1">
    <citation type="journal article" date="1996" name="Nucleic Acids Res.">
        <title>Complete sequence analysis of the genome of the bacterium Mycoplasma pneumoniae.</title>
        <authorList>
            <person name="Himmelreich R."/>
            <person name="Hilbert H."/>
            <person name="Plagens H."/>
            <person name="Pirkl E."/>
            <person name="Li B.-C."/>
            <person name="Herrmann R."/>
        </authorList>
    </citation>
    <scope>NUCLEOTIDE SEQUENCE [LARGE SCALE GENOMIC DNA]</scope>
    <source>
        <strain>ATCC 29342 / M129 / Subtype 1</strain>
    </source>
</reference>
<dbReference type="EC" id="6.1.1.22" evidence="1"/>
<dbReference type="EMBL" id="U00089">
    <property type="protein sequence ID" value="AAB96228.1"/>
    <property type="molecule type" value="Genomic_DNA"/>
</dbReference>
<dbReference type="PIR" id="S73906">
    <property type="entry name" value="S73906"/>
</dbReference>
<dbReference type="RefSeq" id="NP_109940.1">
    <property type="nucleotide sequence ID" value="NC_000912.1"/>
</dbReference>
<dbReference type="RefSeq" id="WP_010874609.1">
    <property type="nucleotide sequence ID" value="NZ_OU342337.1"/>
</dbReference>
<dbReference type="SMR" id="P75521"/>
<dbReference type="IntAct" id="P75521">
    <property type="interactions" value="3"/>
</dbReference>
<dbReference type="STRING" id="272634.MPN_252"/>
<dbReference type="EnsemblBacteria" id="AAB96228">
    <property type="protein sequence ID" value="AAB96228"/>
    <property type="gene ID" value="MPN_252"/>
</dbReference>
<dbReference type="KEGG" id="mpn:MPN_252"/>
<dbReference type="PATRIC" id="fig|272634.6.peg.271"/>
<dbReference type="HOGENOM" id="CLU_004553_2_0_14"/>
<dbReference type="OrthoDB" id="9762036at2"/>
<dbReference type="BioCyc" id="MPNE272634:G1GJ3-398-MONOMER"/>
<dbReference type="Proteomes" id="UP000000808">
    <property type="component" value="Chromosome"/>
</dbReference>
<dbReference type="GO" id="GO:0005737">
    <property type="term" value="C:cytoplasm"/>
    <property type="evidence" value="ECO:0007669"/>
    <property type="project" value="UniProtKB-SubCell"/>
</dbReference>
<dbReference type="GO" id="GO:0004816">
    <property type="term" value="F:asparagine-tRNA ligase activity"/>
    <property type="evidence" value="ECO:0007669"/>
    <property type="project" value="UniProtKB-UniRule"/>
</dbReference>
<dbReference type="GO" id="GO:0005524">
    <property type="term" value="F:ATP binding"/>
    <property type="evidence" value="ECO:0007669"/>
    <property type="project" value="UniProtKB-UniRule"/>
</dbReference>
<dbReference type="GO" id="GO:0003676">
    <property type="term" value="F:nucleic acid binding"/>
    <property type="evidence" value="ECO:0007669"/>
    <property type="project" value="InterPro"/>
</dbReference>
<dbReference type="GO" id="GO:0006421">
    <property type="term" value="P:asparaginyl-tRNA aminoacylation"/>
    <property type="evidence" value="ECO:0007669"/>
    <property type="project" value="UniProtKB-UniRule"/>
</dbReference>
<dbReference type="CDD" id="cd04318">
    <property type="entry name" value="EcAsnRS_like_N"/>
    <property type="match status" value="1"/>
</dbReference>
<dbReference type="FunFam" id="3.30.930.10:FF:000016">
    <property type="entry name" value="Asparagine--tRNA ligase"/>
    <property type="match status" value="1"/>
</dbReference>
<dbReference type="Gene3D" id="3.30.930.10">
    <property type="entry name" value="Bira Bifunctional Protein, Domain 2"/>
    <property type="match status" value="1"/>
</dbReference>
<dbReference type="Gene3D" id="2.40.50.140">
    <property type="entry name" value="Nucleic acid-binding proteins"/>
    <property type="match status" value="1"/>
</dbReference>
<dbReference type="HAMAP" id="MF_00534">
    <property type="entry name" value="Asn_tRNA_synth"/>
    <property type="match status" value="1"/>
</dbReference>
<dbReference type="InterPro" id="IPR004364">
    <property type="entry name" value="Aa-tRNA-synt_II"/>
</dbReference>
<dbReference type="InterPro" id="IPR006195">
    <property type="entry name" value="aa-tRNA-synth_II"/>
</dbReference>
<dbReference type="InterPro" id="IPR045864">
    <property type="entry name" value="aa-tRNA-synth_II/BPL/LPL"/>
</dbReference>
<dbReference type="InterPro" id="IPR004522">
    <property type="entry name" value="Asn-tRNA-ligase"/>
</dbReference>
<dbReference type="InterPro" id="IPR002312">
    <property type="entry name" value="Asp/Asn-tRNA-synth_IIb"/>
</dbReference>
<dbReference type="InterPro" id="IPR012340">
    <property type="entry name" value="NA-bd_OB-fold"/>
</dbReference>
<dbReference type="InterPro" id="IPR004365">
    <property type="entry name" value="NA-bd_OB_tRNA"/>
</dbReference>
<dbReference type="NCBIfam" id="TIGR00457">
    <property type="entry name" value="asnS"/>
    <property type="match status" value="1"/>
</dbReference>
<dbReference type="NCBIfam" id="NF003037">
    <property type="entry name" value="PRK03932.1"/>
    <property type="match status" value="1"/>
</dbReference>
<dbReference type="PANTHER" id="PTHR22594:SF34">
    <property type="entry name" value="ASPARAGINE--TRNA LIGASE, MITOCHONDRIAL-RELATED"/>
    <property type="match status" value="1"/>
</dbReference>
<dbReference type="PANTHER" id="PTHR22594">
    <property type="entry name" value="ASPARTYL/LYSYL-TRNA SYNTHETASE"/>
    <property type="match status" value="1"/>
</dbReference>
<dbReference type="Pfam" id="PF00152">
    <property type="entry name" value="tRNA-synt_2"/>
    <property type="match status" value="1"/>
</dbReference>
<dbReference type="Pfam" id="PF01336">
    <property type="entry name" value="tRNA_anti-codon"/>
    <property type="match status" value="1"/>
</dbReference>
<dbReference type="PRINTS" id="PR01042">
    <property type="entry name" value="TRNASYNTHASP"/>
</dbReference>
<dbReference type="SUPFAM" id="SSF55681">
    <property type="entry name" value="Class II aaRS and biotin synthetases"/>
    <property type="match status" value="1"/>
</dbReference>
<dbReference type="SUPFAM" id="SSF50249">
    <property type="entry name" value="Nucleic acid-binding proteins"/>
    <property type="match status" value="1"/>
</dbReference>
<dbReference type="PROSITE" id="PS50862">
    <property type="entry name" value="AA_TRNA_LIGASE_II"/>
    <property type="match status" value="1"/>
</dbReference>
<keyword id="KW-0030">Aminoacyl-tRNA synthetase</keyword>
<keyword id="KW-0067">ATP-binding</keyword>
<keyword id="KW-0963">Cytoplasm</keyword>
<keyword id="KW-0436">Ligase</keyword>
<keyword id="KW-0547">Nucleotide-binding</keyword>
<keyword id="KW-0648">Protein biosynthesis</keyword>
<keyword id="KW-1185">Reference proteome</keyword>
<protein>
    <recommendedName>
        <fullName evidence="1">Asparagine--tRNA ligase</fullName>
        <ecNumber evidence="1">6.1.1.22</ecNumber>
    </recommendedName>
    <alternativeName>
        <fullName evidence="1">Asparaginyl-tRNA synthetase</fullName>
        <shortName evidence="1">AsnRS</shortName>
    </alternativeName>
</protein>
<accession>P75521</accession>
<comment type="catalytic activity">
    <reaction evidence="1">
        <text>tRNA(Asn) + L-asparagine + ATP = L-asparaginyl-tRNA(Asn) + AMP + diphosphate + H(+)</text>
        <dbReference type="Rhea" id="RHEA:11180"/>
        <dbReference type="Rhea" id="RHEA-COMP:9659"/>
        <dbReference type="Rhea" id="RHEA-COMP:9674"/>
        <dbReference type="ChEBI" id="CHEBI:15378"/>
        <dbReference type="ChEBI" id="CHEBI:30616"/>
        <dbReference type="ChEBI" id="CHEBI:33019"/>
        <dbReference type="ChEBI" id="CHEBI:58048"/>
        <dbReference type="ChEBI" id="CHEBI:78442"/>
        <dbReference type="ChEBI" id="CHEBI:78515"/>
        <dbReference type="ChEBI" id="CHEBI:456215"/>
        <dbReference type="EC" id="6.1.1.22"/>
    </reaction>
</comment>
<comment type="subunit">
    <text evidence="1">Homodimer.</text>
</comment>
<comment type="subcellular location">
    <subcellularLocation>
        <location evidence="1">Cytoplasm</location>
    </subcellularLocation>
</comment>
<comment type="similarity">
    <text evidence="1">Belongs to the class-II aminoacyl-tRNA synthetase family.</text>
</comment>
<gene>
    <name evidence="1" type="primary">asnS</name>
    <name type="ordered locus">MPN_252</name>
    <name type="ORF">MP580</name>
</gene>
<sequence length="455" mass="51898">MSATAISDLFEKPAQFKNKKIKLTGWLKNKRTSANIIFLEVNDGSTLLNLQAVVKQDQPELFALAESISLASAVSVSGTVALTPKSKQPLELVVKQINVLSTARADYPLQKKEHSLEFFRNNAYLRVRARTYFAIMKVRSLLSQAIFDYFFKNDFVLVHSPILTSNDCEGAGETFELKQGKEFFNKTTYLTVSGQFGAECYAQAFKKVFTFGPTFRAEKSHTSRHLSEFWMIEPEVAFANLKDLIKLIESTVKTVIKQVMQKAKQELDFLEKQFDVKLMERLKQITSTKNFHVLEYTKALEILKTAQASGQANFEVQDFNFGLDLKTEHERFLCEQHFHNQPVFVINYPKDFKAFYMKQNADGRTVGAVDLLFPQIGEICGGSEREGNLEKLVERCQAMQIDTQTLNWYLDMRKWGYFASAGFGLGFDRLLAYICGLENIRDAIPFPRAHGSINY</sequence>
<feature type="chain" id="PRO_0000176433" description="Asparagine--tRNA ligase">
    <location>
        <begin position="1"/>
        <end position="455"/>
    </location>
</feature>
<organism>
    <name type="scientific">Mycoplasma pneumoniae (strain ATCC 29342 / M129 / Subtype 1)</name>
    <name type="common">Mycoplasmoides pneumoniae</name>
    <dbReference type="NCBI Taxonomy" id="272634"/>
    <lineage>
        <taxon>Bacteria</taxon>
        <taxon>Bacillati</taxon>
        <taxon>Mycoplasmatota</taxon>
        <taxon>Mycoplasmoidales</taxon>
        <taxon>Mycoplasmoidaceae</taxon>
        <taxon>Mycoplasmoides</taxon>
    </lineage>
</organism>
<name>SYN_MYCPN</name>
<proteinExistence type="inferred from homology"/>
<evidence type="ECO:0000255" key="1">
    <source>
        <dbReference type="HAMAP-Rule" id="MF_00534"/>
    </source>
</evidence>